<proteinExistence type="inferred from homology"/>
<dbReference type="EMBL" id="CP001280">
    <property type="protein sequence ID" value="ACK51048.1"/>
    <property type="molecule type" value="Genomic_DNA"/>
</dbReference>
<dbReference type="RefSeq" id="WP_012591118.1">
    <property type="nucleotide sequence ID" value="NC_011666.1"/>
</dbReference>
<dbReference type="SMR" id="B8ERJ6"/>
<dbReference type="STRING" id="395965.Msil_2109"/>
<dbReference type="KEGG" id="msl:Msil_2109"/>
<dbReference type="eggNOG" id="COG1327">
    <property type="taxonomic scope" value="Bacteria"/>
</dbReference>
<dbReference type="HOGENOM" id="CLU_108412_0_1_5"/>
<dbReference type="OrthoDB" id="9807461at2"/>
<dbReference type="Proteomes" id="UP000002257">
    <property type="component" value="Chromosome"/>
</dbReference>
<dbReference type="GO" id="GO:0005524">
    <property type="term" value="F:ATP binding"/>
    <property type="evidence" value="ECO:0007669"/>
    <property type="project" value="UniProtKB-KW"/>
</dbReference>
<dbReference type="GO" id="GO:0003677">
    <property type="term" value="F:DNA binding"/>
    <property type="evidence" value="ECO:0007669"/>
    <property type="project" value="UniProtKB-KW"/>
</dbReference>
<dbReference type="GO" id="GO:0008270">
    <property type="term" value="F:zinc ion binding"/>
    <property type="evidence" value="ECO:0007669"/>
    <property type="project" value="UniProtKB-UniRule"/>
</dbReference>
<dbReference type="GO" id="GO:0045892">
    <property type="term" value="P:negative regulation of DNA-templated transcription"/>
    <property type="evidence" value="ECO:0007669"/>
    <property type="project" value="UniProtKB-UniRule"/>
</dbReference>
<dbReference type="HAMAP" id="MF_00440">
    <property type="entry name" value="NrdR"/>
    <property type="match status" value="1"/>
</dbReference>
<dbReference type="InterPro" id="IPR005144">
    <property type="entry name" value="ATP-cone_dom"/>
</dbReference>
<dbReference type="InterPro" id="IPR055173">
    <property type="entry name" value="NrdR-like_N"/>
</dbReference>
<dbReference type="InterPro" id="IPR003796">
    <property type="entry name" value="RNR_NrdR-like"/>
</dbReference>
<dbReference type="NCBIfam" id="TIGR00244">
    <property type="entry name" value="transcriptional regulator NrdR"/>
    <property type="match status" value="1"/>
</dbReference>
<dbReference type="PANTHER" id="PTHR30455">
    <property type="entry name" value="TRANSCRIPTIONAL REPRESSOR NRDR"/>
    <property type="match status" value="1"/>
</dbReference>
<dbReference type="PANTHER" id="PTHR30455:SF2">
    <property type="entry name" value="TRANSCRIPTIONAL REPRESSOR NRDR"/>
    <property type="match status" value="1"/>
</dbReference>
<dbReference type="Pfam" id="PF03477">
    <property type="entry name" value="ATP-cone"/>
    <property type="match status" value="1"/>
</dbReference>
<dbReference type="Pfam" id="PF22811">
    <property type="entry name" value="Zn_ribbon_NrdR"/>
    <property type="match status" value="1"/>
</dbReference>
<dbReference type="PROSITE" id="PS51161">
    <property type="entry name" value="ATP_CONE"/>
    <property type="match status" value="1"/>
</dbReference>
<organism>
    <name type="scientific">Methylocella silvestris (strain DSM 15510 / CIP 108128 / LMG 27833 / NCIMB 13906 / BL2)</name>
    <dbReference type="NCBI Taxonomy" id="395965"/>
    <lineage>
        <taxon>Bacteria</taxon>
        <taxon>Pseudomonadati</taxon>
        <taxon>Pseudomonadota</taxon>
        <taxon>Alphaproteobacteria</taxon>
        <taxon>Hyphomicrobiales</taxon>
        <taxon>Beijerinckiaceae</taxon>
        <taxon>Methylocella</taxon>
    </lineage>
</organism>
<evidence type="ECO:0000255" key="1">
    <source>
        <dbReference type="HAMAP-Rule" id="MF_00440"/>
    </source>
</evidence>
<evidence type="ECO:0000256" key="2">
    <source>
        <dbReference type="SAM" id="MobiDB-lite"/>
    </source>
</evidence>
<keyword id="KW-0067">ATP-binding</keyword>
<keyword id="KW-0238">DNA-binding</keyword>
<keyword id="KW-0479">Metal-binding</keyword>
<keyword id="KW-0547">Nucleotide-binding</keyword>
<keyword id="KW-1185">Reference proteome</keyword>
<keyword id="KW-0678">Repressor</keyword>
<keyword id="KW-0804">Transcription</keyword>
<keyword id="KW-0805">Transcription regulation</keyword>
<keyword id="KW-0862">Zinc</keyword>
<keyword id="KW-0863">Zinc-finger</keyword>
<comment type="function">
    <text evidence="1">Negatively regulates transcription of bacterial ribonucleotide reductase nrd genes and operons by binding to NrdR-boxes.</text>
</comment>
<comment type="cofactor">
    <cofactor evidence="1">
        <name>Zn(2+)</name>
        <dbReference type="ChEBI" id="CHEBI:29105"/>
    </cofactor>
    <text evidence="1">Binds 1 zinc ion.</text>
</comment>
<comment type="similarity">
    <text evidence="1">Belongs to the NrdR family.</text>
</comment>
<protein>
    <recommendedName>
        <fullName evidence="1">Transcriptional repressor NrdR</fullName>
    </recommendedName>
</protein>
<sequence length="176" mass="19914">MRCPYCGSLETQVKDSRPTDDASAIRRRRVCPDCGGRFTTFERVQLRELTVLKKSGRRAPFEREKLMRSLEIALRKRPVEPERVERMVNGIVRQLESQGESEIASDRIGELVMEGLRALDSVAYVRFASVYRNFREARDFNALIDELDGAAQPEAPSKDDGGTDEPPAKTRAPTRA</sequence>
<name>NRDR_METSB</name>
<feature type="chain" id="PRO_1000191805" description="Transcriptional repressor NrdR">
    <location>
        <begin position="1"/>
        <end position="176"/>
    </location>
</feature>
<feature type="domain" description="ATP-cone" evidence="1">
    <location>
        <begin position="49"/>
        <end position="139"/>
    </location>
</feature>
<feature type="zinc finger region" evidence="1">
    <location>
        <begin position="3"/>
        <end position="34"/>
    </location>
</feature>
<feature type="region of interest" description="Disordered" evidence="2">
    <location>
        <begin position="147"/>
        <end position="176"/>
    </location>
</feature>
<reference key="1">
    <citation type="journal article" date="2010" name="J. Bacteriol.">
        <title>Complete genome sequence of the aerobic facultative methanotroph Methylocella silvestris BL2.</title>
        <authorList>
            <person name="Chen Y."/>
            <person name="Crombie A."/>
            <person name="Rahman M.T."/>
            <person name="Dedysh S.N."/>
            <person name="Liesack W."/>
            <person name="Stott M.B."/>
            <person name="Alam M."/>
            <person name="Theisen A.R."/>
            <person name="Murrell J.C."/>
            <person name="Dunfield P.F."/>
        </authorList>
    </citation>
    <scope>NUCLEOTIDE SEQUENCE [LARGE SCALE GENOMIC DNA]</scope>
    <source>
        <strain>DSM 15510 / CIP 108128 / LMG 27833 / NCIMB 13906 / BL2</strain>
    </source>
</reference>
<accession>B8ERJ6</accession>
<gene>
    <name evidence="1" type="primary">nrdR</name>
    <name type="ordered locus">Msil_2109</name>
</gene>